<accession>P23423</accession>
<comment type="function">
    <text evidence="1">The surface protein (SU) attaches the virus to the host cell by binding to its receptor. This interaction triggers the refolding of the transmembrane protein (TM) and is thought to activate its fusogenic potential by unmasking its fusion peptide. Fusion occurs at the host cell plasma membrane (By similarity).</text>
</comment>
<comment type="function">
    <text evidence="1">The transmembrane protein (TM) acts as a class I viral fusion protein. Under the current model, the protein has at least 3 conformational states: pre-fusion native state, pre-hairpin intermediate state, and post-fusion hairpin state. During viral and target cell membrane fusion, the coiled coil regions (heptad repeats) assume a trimer-of-hairpins structure, positioning the fusion peptide in close proximity to the C-terminal region of the ectodomain. The formation of this structure appears to drive apposition and subsequent fusion of viral and target cell membranes. Membranes fusion leads to delivery of the nucleocapsid into the cytoplasm (By similarity).</text>
</comment>
<comment type="subunit">
    <text evidence="1">The mature envelope protein (Env) consists of a trimer of SU-TM heterodimers attached by noncovalent interactions or by a labile interchain disulfide bond.</text>
</comment>
<comment type="subcellular location">
    <molecule>Transmembrane protein</molecule>
    <subcellularLocation>
        <location evidence="1">Virion membrane</location>
        <topology evidence="1">Single-pass type I membrane protein</topology>
    </subcellularLocation>
    <subcellularLocation>
        <location evidence="1">Host cell membrane</location>
        <topology evidence="1">Single-pass type I membrane protein</topology>
    </subcellularLocation>
    <text evidence="1">It is probably concentrated at the site of budding and incorporated into the virions possibly by contacts between the cytoplasmic tail of Env and the N-terminus of Gag.</text>
</comment>
<comment type="subcellular location">
    <molecule>Surface protein</molecule>
    <subcellularLocation>
        <location evidence="1">Virion membrane</location>
        <topology evidence="1">Peripheral membrane protein</topology>
    </subcellularLocation>
    <subcellularLocation>
        <location evidence="1">Host cell membrane</location>
        <topology evidence="1">Peripheral membrane protein</topology>
    </subcellularLocation>
    <text evidence="1">The surface protein is not anchored to the viral envelope, but associates with the extravirion surface through its binding to TM. It is probably concentrated at the site of budding and incorporated into the virions possibly by contacts between the cytoplasmic tail of Env and the N-terminus of Gag (By similarity).</text>
</comment>
<comment type="PTM">
    <text evidence="1">Specific enzymatic cleavages in vivo yield mature proteins. Envelope glycoproteins are synthesized as an inactive precursor that is N-glycosylated and processed likely by host cell furin or by a furin-like protease in the Golgi to yield the mature SU and TM proteins. The cleavage site between SU and TM requires the minimal sequence [KR]-X-[KR]-R (By similarity).</text>
</comment>
<comment type="PTM">
    <text evidence="1">The transmembrane protein is palmitoylated.</text>
</comment>
<comment type="sequence caution" evidence="3">
    <conflict type="erroneous initiation">
        <sequence resource="EMBL-CDS" id="AAA17532"/>
    </conflict>
</comment>
<gene>
    <name type="primary">env</name>
</gene>
<reference key="1">
    <citation type="journal article" date="1991" name="Virology">
        <title>Isolation of replication-competent molecular clones of visna virus.</title>
        <authorList>
            <person name="Staskus K.A."/>
            <person name="Retzel E.F."/>
            <person name="Lewis E.D."/>
            <person name="Wietgrefe S.W."/>
            <person name="Silsby J.L."/>
            <person name="Cyr S."/>
            <person name="Rank J.M."/>
            <person name="Haase A.T."/>
            <person name="Fast D."/>
            <person name="Geiser P.T."/>
            <person name="Harty J.T."/>
            <person name="Kong S.H."/>
            <person name="Cook R."/>
            <person name="Lahti C.J."/>
            <person name="Neufeld T.P."/>
            <person name="Porter T.E."/>
            <person name="Shoop E."/>
            <person name="Zachow K.R."/>
        </authorList>
    </citation>
    <scope>NUCLEOTIDE SEQUENCE</scope>
</reference>
<protein>
    <recommendedName>
        <fullName>Envelope glycoprotein gp160</fullName>
    </recommendedName>
    <alternativeName>
        <fullName>Env polyprotein</fullName>
    </alternativeName>
    <component>
        <recommendedName>
            <fullName>Surface protein</fullName>
        </recommendedName>
        <alternativeName>
            <fullName>Glycoprotein 135</fullName>
            <shortName>gp135</shortName>
        </alternativeName>
    </component>
    <component>
        <recommendedName>
            <fullName>Transmembrane protein</fullName>
        </recommendedName>
        <alternativeName>
            <fullName>Glycoprotein 46</fullName>
            <shortName>gp46</shortName>
        </alternativeName>
    </component>
</protein>
<sequence length="991" mass="115016">MTSKESKPSRTTWRGMEPPLRETWNQVLQELVKRQQQEEEEQQGLVSGKKKSWVSIDLLGTEGKDIKKVNIWEPCEKWFAQVVWGVLWVLQIVLWGCLMWEMRKGNQCQAEEVIALVSDPGGFQRVQHVETVPVTCVTKNFTQWGCQPEGAYPDPELEYRNISREILEEVYKQDWPWNTYHWPLWQMENMRQWMKENEKEYKERTNKTKEDIDDLVAGRIRGRFCVPYPYALLRCEEWCWYPESINQETGHAEKIKINCTKAKAVSCTEKMPLAAVQRVYWEKEDEESMKFLNIKACNISLRCQDEEKSPGGCVQGYPIPKGAEIIPEAMKYLRGKKSRYGGIKDKNGELKLPLSVRVWVRMANLSGWVNGTPPYWNARINGSTGINGTRWYGVGTLHHLGYNISSNPERGICDFTGELWIGGDKFPYYYKPSWNCSQNWTGHPVWQVFRYLDMTEHMTSRCIQRPERHNITVGNGTITGNCSVTNWDGCNCTRSGNHLYNSTSGGLLVIICRQNSTITGIMGTNTNWTTMWNIYQNCSKCNNSSLDRTGKGTLGTVNDLKCSLPHRNESNKWTCAARTGRKGSQRDSLYIAGRDFWGRVKAKYSCESNLGGLDSMMHQQMLLQRYQVIRVRAYTYGVVEMPQSYMEAQGKNRRSRRNLQRKKRGIGLVIVLAIMAIIAAAGAGLGVANAVQQSYTRTAVQSLANATAAQQEVLEASYAMVQHIAKGIRILEARVARVEALVDRMMVYHELDCWHYQHYCVTSTRSEVANYVNWTRFKDNCTWQQWEEEIEQHEGNLSLLLREAALQVHIAQRDARRIPDAWKAIQEAFNWSSWFSWLKYVPWIIMGIVGLICFRILMCVISMCLQAYKQVKQIRYTQVTVVIEAPVELEEKQKRNGDGTNGCASLEHERRTSHRSFIQIWRATWWAWKTSPWRHNWRTMPYITLLPILVIWQWMEENGWNGENQHKKKKERVDCQDREQMPTLENDYVEL</sequence>
<evidence type="ECO:0000250" key="1"/>
<evidence type="ECO:0000255" key="2"/>
<evidence type="ECO:0000305" key="3"/>
<keyword id="KW-0165">Cleavage on pair of basic residues</keyword>
<keyword id="KW-0175">Coiled coil</keyword>
<keyword id="KW-1015">Disulfide bond</keyword>
<keyword id="KW-0325">Glycoprotein</keyword>
<keyword id="KW-1032">Host cell membrane</keyword>
<keyword id="KW-1043">Host membrane</keyword>
<keyword id="KW-0945">Host-virus interaction</keyword>
<keyword id="KW-0449">Lipoprotein</keyword>
<keyword id="KW-0472">Membrane</keyword>
<keyword id="KW-0564">Palmitate</keyword>
<keyword id="KW-0732">Signal</keyword>
<keyword id="KW-0812">Transmembrane</keyword>
<keyword id="KW-1133">Transmembrane helix</keyword>
<keyword id="KW-1161">Viral attachment to host cell</keyword>
<keyword id="KW-0261">Viral envelope protein</keyword>
<keyword id="KW-0946">Virion</keyword>
<keyword id="KW-1160">Virus entry into host cell</keyword>
<name>ENV_VILV2</name>
<dbReference type="EMBL" id="M60610">
    <property type="protein sequence ID" value="AAA17532.1"/>
    <property type="status" value="ALT_INIT"/>
    <property type="molecule type" value="Unassigned_DNA"/>
</dbReference>
<dbReference type="GlyCosmos" id="P23423">
    <property type="glycosylation" value="27 sites, No reported glycans"/>
</dbReference>
<dbReference type="GO" id="GO:0020002">
    <property type="term" value="C:host cell plasma membrane"/>
    <property type="evidence" value="ECO:0007669"/>
    <property type="project" value="UniProtKB-SubCell"/>
</dbReference>
<dbReference type="GO" id="GO:0016020">
    <property type="term" value="C:membrane"/>
    <property type="evidence" value="ECO:0007669"/>
    <property type="project" value="UniProtKB-KW"/>
</dbReference>
<dbReference type="GO" id="GO:0019031">
    <property type="term" value="C:viral envelope"/>
    <property type="evidence" value="ECO:0007669"/>
    <property type="project" value="UniProtKB-KW"/>
</dbReference>
<dbReference type="GO" id="GO:0055036">
    <property type="term" value="C:virion membrane"/>
    <property type="evidence" value="ECO:0007669"/>
    <property type="project" value="UniProtKB-SubCell"/>
</dbReference>
<dbReference type="GO" id="GO:0046718">
    <property type="term" value="P:symbiont entry into host cell"/>
    <property type="evidence" value="ECO:0007669"/>
    <property type="project" value="UniProtKB-KW"/>
</dbReference>
<dbReference type="GO" id="GO:0019062">
    <property type="term" value="P:virion attachment to host cell"/>
    <property type="evidence" value="ECO:0007669"/>
    <property type="project" value="UniProtKB-KW"/>
</dbReference>
<dbReference type="Gene3D" id="1.20.5.440">
    <property type="entry name" value="ATP synthase delta/epsilon subunit, C-terminal domain"/>
    <property type="match status" value="1"/>
</dbReference>
<dbReference type="SUPFAM" id="SSF58069">
    <property type="entry name" value="Virus ectodomain"/>
    <property type="match status" value="1"/>
</dbReference>
<feature type="signal peptide" evidence="2">
    <location>
        <begin position="1"/>
        <end position="106"/>
    </location>
</feature>
<feature type="chain" id="PRO_0000239542" description="Envelope glycoprotein gp160">
    <location>
        <begin position="107"/>
        <end position="991"/>
    </location>
</feature>
<feature type="chain" id="PRO_0000038741" description="Surface protein" evidence="1">
    <location>
        <begin position="107"/>
        <end position="664"/>
    </location>
</feature>
<feature type="chain" id="PRO_0000038742" description="Transmembrane protein" evidence="1">
    <location>
        <begin position="665"/>
        <end position="991"/>
    </location>
</feature>
<feature type="topological domain" description="Extracellular" evidence="2">
    <location>
        <begin position="107"/>
        <end position="840"/>
    </location>
</feature>
<feature type="transmembrane region" description="Helical" evidence="2">
    <location>
        <begin position="841"/>
        <end position="861"/>
    </location>
</feature>
<feature type="topological domain" description="Cytoplasmic" evidence="2">
    <location>
        <begin position="862"/>
        <end position="991"/>
    </location>
</feature>
<feature type="region of interest" description="Fusion peptide">
    <location>
        <begin position="665"/>
        <end position="685"/>
    </location>
</feature>
<feature type="region of interest" description="Immunosuppression" evidence="1">
    <location>
        <begin position="731"/>
        <end position="747"/>
    </location>
</feature>
<feature type="coiled-coil region" evidence="2">
    <location>
        <begin position="697"/>
        <end position="747"/>
    </location>
</feature>
<feature type="coiled-coil region" evidence="2">
    <location>
        <begin position="788"/>
        <end position="823"/>
    </location>
</feature>
<feature type="site" description="Cleavage; by host" evidence="1">
    <location>
        <begin position="664"/>
        <end position="665"/>
    </location>
</feature>
<feature type="lipid moiety-binding region" description="S-palmitoyl cysteine; by host" evidence="1">
    <location>
        <position position="864"/>
    </location>
</feature>
<feature type="glycosylation site" description="N-linked (GlcNAc...) asparagine; by host" evidence="2">
    <location>
        <position position="140"/>
    </location>
</feature>
<feature type="glycosylation site" description="N-linked (GlcNAc...) asparagine; by host" evidence="2">
    <location>
        <position position="161"/>
    </location>
</feature>
<feature type="glycosylation site" description="N-linked (GlcNAc...) asparagine; by host" evidence="2">
    <location>
        <position position="206"/>
    </location>
</feature>
<feature type="glycosylation site" description="N-linked (GlcNAc...) asparagine; by host" evidence="2">
    <location>
        <position position="258"/>
    </location>
</feature>
<feature type="glycosylation site" description="N-linked (GlcNAc...) asparagine; by host" evidence="2">
    <location>
        <position position="298"/>
    </location>
</feature>
<feature type="glycosylation site" description="N-linked (GlcNAc...) asparagine; by host" evidence="2">
    <location>
        <position position="364"/>
    </location>
</feature>
<feature type="glycosylation site" description="N-linked (GlcNAc...) asparagine; by host" evidence="2">
    <location>
        <position position="381"/>
    </location>
</feature>
<feature type="glycosylation site" description="N-linked (GlcNAc...) asparagine; by host" evidence="2">
    <location>
        <position position="387"/>
    </location>
</feature>
<feature type="glycosylation site" description="N-linked (GlcNAc...) asparagine; by host" evidence="2">
    <location>
        <position position="403"/>
    </location>
</feature>
<feature type="glycosylation site" description="N-linked (GlcNAc...) asparagine; by host" evidence="2">
    <location>
        <position position="435"/>
    </location>
</feature>
<feature type="glycosylation site" description="N-linked (GlcNAc...) asparagine; by host" evidence="2">
    <location>
        <position position="439"/>
    </location>
</feature>
<feature type="glycosylation site" description="N-linked (GlcNAc...) asparagine; by host" evidence="2">
    <location>
        <position position="470"/>
    </location>
</feature>
<feature type="glycosylation site" description="N-linked (GlcNAc...) asparagine; by host" evidence="2">
    <location>
        <position position="475"/>
    </location>
</feature>
<feature type="glycosylation site" description="N-linked (GlcNAc...) asparagine; by host" evidence="2">
    <location>
        <position position="481"/>
    </location>
</feature>
<feature type="glycosylation site" description="N-linked (GlcNAc...) asparagine; by host" evidence="2">
    <location>
        <position position="491"/>
    </location>
</feature>
<feature type="glycosylation site" description="N-linked (GlcNAc...) asparagine; by host" evidence="2">
    <location>
        <position position="501"/>
    </location>
</feature>
<feature type="glycosylation site" description="N-linked (GlcNAc...) asparagine; by host" evidence="2">
    <location>
        <position position="515"/>
    </location>
</feature>
<feature type="glycosylation site" description="N-linked (GlcNAc...) asparagine; by host" evidence="2">
    <location>
        <position position="527"/>
    </location>
</feature>
<feature type="glycosylation site" description="N-linked (GlcNAc...) asparagine; by host" evidence="2">
    <location>
        <position position="537"/>
    </location>
</feature>
<feature type="glycosylation site" description="N-linked (GlcNAc...) asparagine; by host" evidence="2">
    <location>
        <position position="542"/>
    </location>
</feature>
<feature type="glycosylation site" description="N-linked (GlcNAc...) asparagine; by host" evidence="2">
    <location>
        <position position="543"/>
    </location>
</feature>
<feature type="glycosylation site" description="N-linked (GlcNAc...) asparagine; by host" evidence="2">
    <location>
        <position position="568"/>
    </location>
</feature>
<feature type="glycosylation site" description="N-linked (GlcNAc...) asparagine; by host" evidence="2">
    <location>
        <position position="705"/>
    </location>
</feature>
<feature type="glycosylation site" description="N-linked (GlcNAc...) asparagine; by host" evidence="2">
    <location>
        <position position="773"/>
    </location>
</feature>
<feature type="glycosylation site" description="N-linked (GlcNAc...) asparagine; by host" evidence="2">
    <location>
        <position position="780"/>
    </location>
</feature>
<feature type="glycosylation site" description="N-linked (GlcNAc...) asparagine; by host" evidence="2">
    <location>
        <position position="796"/>
    </location>
</feature>
<feature type="glycosylation site" description="N-linked (GlcNAc...) asparagine; by host" evidence="2">
    <location>
        <position position="830"/>
    </location>
</feature>
<feature type="sequence conflict" description="In Ref. 1; AAA17532." evidence="3" ref="1">
    <original>E</original>
    <variation>D</variation>
    <location>
        <position position="17"/>
    </location>
</feature>
<proteinExistence type="inferred from homology"/>
<organismHost>
    <name type="scientific">Ovis aries</name>
    <name type="common">Sheep</name>
    <dbReference type="NCBI Taxonomy" id="9940"/>
</organismHost>
<organism>
    <name type="scientific">Maedi visna virus (strain 1514 / clone LV1-1KS2)</name>
    <name type="common">MVV</name>
    <name type="synonym">Visna lentivirus</name>
    <dbReference type="NCBI Taxonomy" id="11744"/>
    <lineage>
        <taxon>Viruses</taxon>
        <taxon>Riboviria</taxon>
        <taxon>Pararnavirae</taxon>
        <taxon>Artverviricota</taxon>
        <taxon>Revtraviricetes</taxon>
        <taxon>Ortervirales</taxon>
        <taxon>Retroviridae</taxon>
        <taxon>Orthoretrovirinae</taxon>
        <taxon>Lentivirus</taxon>
        <taxon>Visna-maedi virus</taxon>
    </lineage>
</organism>